<evidence type="ECO:0000250" key="1"/>
<evidence type="ECO:0000255" key="2"/>
<evidence type="ECO:0000255" key="3">
    <source>
        <dbReference type="PROSITE-ProRule" id="PRU00716"/>
    </source>
</evidence>
<evidence type="ECO:0000305" key="4"/>
<reference key="1">
    <citation type="journal article" date="2009" name="Nature">
        <title>Evolution of pathogenicity and sexual reproduction in eight Candida genomes.</title>
        <authorList>
            <person name="Butler G."/>
            <person name="Rasmussen M.D."/>
            <person name="Lin M.F."/>
            <person name="Santos M.A.S."/>
            <person name="Sakthikumar S."/>
            <person name="Munro C.A."/>
            <person name="Rheinbay E."/>
            <person name="Grabherr M."/>
            <person name="Forche A."/>
            <person name="Reedy J.L."/>
            <person name="Agrafioti I."/>
            <person name="Arnaud M.B."/>
            <person name="Bates S."/>
            <person name="Brown A.J.P."/>
            <person name="Brunke S."/>
            <person name="Costanzo M.C."/>
            <person name="Fitzpatrick D.A."/>
            <person name="de Groot P.W.J."/>
            <person name="Harris D."/>
            <person name="Hoyer L.L."/>
            <person name="Hube B."/>
            <person name="Klis F.M."/>
            <person name="Kodira C."/>
            <person name="Lennard N."/>
            <person name="Logue M.E."/>
            <person name="Martin R."/>
            <person name="Neiman A.M."/>
            <person name="Nikolaou E."/>
            <person name="Quail M.A."/>
            <person name="Quinn J."/>
            <person name="Santos M.C."/>
            <person name="Schmitzberger F.F."/>
            <person name="Sherlock G."/>
            <person name="Shah P."/>
            <person name="Silverstein K.A.T."/>
            <person name="Skrzypek M.S."/>
            <person name="Soll D."/>
            <person name="Staggs R."/>
            <person name="Stansfield I."/>
            <person name="Stumpf M.P.H."/>
            <person name="Sudbery P.E."/>
            <person name="Srikantha T."/>
            <person name="Zeng Q."/>
            <person name="Berman J."/>
            <person name="Berriman M."/>
            <person name="Heitman J."/>
            <person name="Gow N.A.R."/>
            <person name="Lorenz M.C."/>
            <person name="Birren B.W."/>
            <person name="Kellis M."/>
            <person name="Cuomo C.A."/>
        </authorList>
    </citation>
    <scope>NUCLEOTIDE SEQUENCE [LARGE SCALE GENOMIC DNA]</scope>
    <source>
        <strain>ATCC 11503 / BCRC 21390 / CBS 2605 / JCM 1781 / NBRC 1676 / NRRL YB-4239</strain>
    </source>
</reference>
<protein>
    <recommendedName>
        <fullName>NADH-cytochrome b5 reductase 2</fullName>
        <ecNumber>1.6.2.2</ecNumber>
    </recommendedName>
    <alternativeName>
        <fullName>Mitochondrial cytochrome b reductase</fullName>
    </alternativeName>
</protein>
<proteinExistence type="inferred from homology"/>
<keyword id="KW-0274">FAD</keyword>
<keyword id="KW-0285">Flavoprotein</keyword>
<keyword id="KW-0472">Membrane</keyword>
<keyword id="KW-0496">Mitochondrion</keyword>
<keyword id="KW-1000">Mitochondrion outer membrane</keyword>
<keyword id="KW-0520">NAD</keyword>
<keyword id="KW-0560">Oxidoreductase</keyword>
<keyword id="KW-1185">Reference proteome</keyword>
<keyword id="KW-0812">Transmembrane</keyword>
<keyword id="KW-1133">Transmembrane helix</keyword>
<sequence>MSVSRLFSNPKFVYPLVGATIGSIGLAYYSTQAQFYIANETGKTFTGGDQWIDLKLKKSEDLTHNTKHLTFELLNPDDVSGLITASMLMTKYVTPKGNNVIRPYTPVSDPDQKGTLDFVIKRYENGKMSNHIHNLKEGETLSFKGPVVKWKWEPNQFKSIALIGGGTGITPLYQLLREITSNPEDKTKVSLIYGNTSPEDVLIKDRIDDIAAKHKDQVKVTYFVDENKATKDWEGEVGFITKEFLEKELDKPSPDFKIFVCGPPGLYKAISGVKVSPTDQGEVEGALKDLGFSKEHVFKF</sequence>
<name>MCR1_LODEL</name>
<gene>
    <name type="primary">MCR1</name>
    <name type="ORF">LELG_04814</name>
</gene>
<organism>
    <name type="scientific">Lodderomyces elongisporus (strain ATCC 11503 / CBS 2605 / JCM 1781 / NBRC 1676 / NRRL YB-4239)</name>
    <name type="common">Yeast</name>
    <name type="synonym">Saccharomyces elongisporus</name>
    <dbReference type="NCBI Taxonomy" id="379508"/>
    <lineage>
        <taxon>Eukaryota</taxon>
        <taxon>Fungi</taxon>
        <taxon>Dikarya</taxon>
        <taxon>Ascomycota</taxon>
        <taxon>Saccharomycotina</taxon>
        <taxon>Pichiomycetes</taxon>
        <taxon>Debaryomycetaceae</taxon>
        <taxon>Candida/Lodderomyces clade</taxon>
        <taxon>Lodderomyces</taxon>
    </lineage>
</organism>
<feature type="chain" id="PRO_0000330183" description="NADH-cytochrome b5 reductase 2">
    <location>
        <begin position="1"/>
        <end position="300"/>
    </location>
</feature>
<feature type="transmembrane region" description="Helical" evidence="2">
    <location>
        <begin position="12"/>
        <end position="29"/>
    </location>
</feature>
<feature type="domain" description="FAD-binding FR-type" evidence="3">
    <location>
        <begin position="49"/>
        <end position="153"/>
    </location>
</feature>
<feature type="binding site" evidence="1">
    <location>
        <begin position="156"/>
        <end position="191"/>
    </location>
    <ligand>
        <name>FAD</name>
        <dbReference type="ChEBI" id="CHEBI:57692"/>
    </ligand>
</feature>
<dbReference type="EC" id="1.6.2.2"/>
<dbReference type="EMBL" id="CH981530">
    <property type="protein sequence ID" value="EDK46633.1"/>
    <property type="molecule type" value="Genomic_DNA"/>
</dbReference>
<dbReference type="RefSeq" id="XP_001524001.1">
    <property type="nucleotide sequence ID" value="XM_001523951.1"/>
</dbReference>
<dbReference type="SMR" id="A5E5C5"/>
<dbReference type="FunCoup" id="A5E5C5">
    <property type="interactions" value="315"/>
</dbReference>
<dbReference type="STRING" id="379508.A5E5C5"/>
<dbReference type="GeneID" id="5231247"/>
<dbReference type="KEGG" id="lel:PVL30_005544"/>
<dbReference type="VEuPathDB" id="FungiDB:LELG_04814"/>
<dbReference type="eggNOG" id="KOG0534">
    <property type="taxonomic scope" value="Eukaryota"/>
</dbReference>
<dbReference type="HOGENOM" id="CLU_003827_9_1_1"/>
<dbReference type="InParanoid" id="A5E5C5"/>
<dbReference type="OMA" id="KGPEMQK"/>
<dbReference type="OrthoDB" id="432685at2759"/>
<dbReference type="Proteomes" id="UP000001996">
    <property type="component" value="Unassembled WGS sequence"/>
</dbReference>
<dbReference type="GO" id="GO:0005741">
    <property type="term" value="C:mitochondrial outer membrane"/>
    <property type="evidence" value="ECO:0007669"/>
    <property type="project" value="UniProtKB-SubCell"/>
</dbReference>
<dbReference type="GO" id="GO:0004128">
    <property type="term" value="F:cytochrome-b5 reductase activity, acting on NAD(P)H"/>
    <property type="evidence" value="ECO:0007669"/>
    <property type="project" value="UniProtKB-EC"/>
</dbReference>
<dbReference type="GO" id="GO:0006696">
    <property type="term" value="P:ergosterol biosynthetic process"/>
    <property type="evidence" value="ECO:0007669"/>
    <property type="project" value="TreeGrafter"/>
</dbReference>
<dbReference type="CDD" id="cd06183">
    <property type="entry name" value="cyt_b5_reduct_like"/>
    <property type="match status" value="1"/>
</dbReference>
<dbReference type="FunFam" id="2.40.30.10:FF:000032">
    <property type="entry name" value="NADH-cytochrome b5 reductase"/>
    <property type="match status" value="1"/>
</dbReference>
<dbReference type="FunFam" id="3.40.50.80:FF:000009">
    <property type="entry name" value="NADH-cytochrome b5 reductase"/>
    <property type="match status" value="1"/>
</dbReference>
<dbReference type="Gene3D" id="3.40.50.80">
    <property type="entry name" value="Nucleotide-binding domain of ferredoxin-NADP reductase (FNR) module"/>
    <property type="match status" value="1"/>
</dbReference>
<dbReference type="Gene3D" id="2.40.30.10">
    <property type="entry name" value="Translation factors"/>
    <property type="match status" value="1"/>
</dbReference>
<dbReference type="InterPro" id="IPR001834">
    <property type="entry name" value="CBR-like"/>
</dbReference>
<dbReference type="InterPro" id="IPR008333">
    <property type="entry name" value="Cbr1-like_FAD-bd_dom"/>
</dbReference>
<dbReference type="InterPro" id="IPR017927">
    <property type="entry name" value="FAD-bd_FR_type"/>
</dbReference>
<dbReference type="InterPro" id="IPR001709">
    <property type="entry name" value="Flavoprot_Pyr_Nucl_cyt_Rdtase"/>
</dbReference>
<dbReference type="InterPro" id="IPR039261">
    <property type="entry name" value="FNR_nucleotide-bd"/>
</dbReference>
<dbReference type="InterPro" id="IPR001433">
    <property type="entry name" value="OxRdtase_FAD/NAD-bd"/>
</dbReference>
<dbReference type="InterPro" id="IPR017938">
    <property type="entry name" value="Riboflavin_synthase-like_b-brl"/>
</dbReference>
<dbReference type="PANTHER" id="PTHR19370">
    <property type="entry name" value="NADH-CYTOCHROME B5 REDUCTASE"/>
    <property type="match status" value="1"/>
</dbReference>
<dbReference type="PANTHER" id="PTHR19370:SF171">
    <property type="entry name" value="NADH-CYTOCHROME B5 REDUCTASE 2"/>
    <property type="match status" value="1"/>
</dbReference>
<dbReference type="Pfam" id="PF00970">
    <property type="entry name" value="FAD_binding_6"/>
    <property type="match status" value="1"/>
</dbReference>
<dbReference type="Pfam" id="PF00175">
    <property type="entry name" value="NAD_binding_1"/>
    <property type="match status" value="1"/>
</dbReference>
<dbReference type="PRINTS" id="PR00406">
    <property type="entry name" value="CYTB5RDTASE"/>
</dbReference>
<dbReference type="PRINTS" id="PR00371">
    <property type="entry name" value="FPNCR"/>
</dbReference>
<dbReference type="SUPFAM" id="SSF52343">
    <property type="entry name" value="Ferredoxin reductase-like, C-terminal NADP-linked domain"/>
    <property type="match status" value="1"/>
</dbReference>
<dbReference type="SUPFAM" id="SSF63380">
    <property type="entry name" value="Riboflavin synthase domain-like"/>
    <property type="match status" value="1"/>
</dbReference>
<dbReference type="PROSITE" id="PS51384">
    <property type="entry name" value="FAD_FR"/>
    <property type="match status" value="1"/>
</dbReference>
<comment type="function">
    <text evidence="1">May mediate the reduction of outer membrane cytochrome b5.</text>
</comment>
<comment type="catalytic activity">
    <reaction>
        <text>2 Fe(III)-[cytochrome b5] + NADH = 2 Fe(II)-[cytochrome b5] + NAD(+) + H(+)</text>
        <dbReference type="Rhea" id="RHEA:46680"/>
        <dbReference type="Rhea" id="RHEA-COMP:10438"/>
        <dbReference type="Rhea" id="RHEA-COMP:10439"/>
        <dbReference type="ChEBI" id="CHEBI:15378"/>
        <dbReference type="ChEBI" id="CHEBI:29033"/>
        <dbReference type="ChEBI" id="CHEBI:29034"/>
        <dbReference type="ChEBI" id="CHEBI:57540"/>
        <dbReference type="ChEBI" id="CHEBI:57945"/>
        <dbReference type="EC" id="1.6.2.2"/>
    </reaction>
</comment>
<comment type="cofactor">
    <cofactor evidence="1">
        <name>FAD</name>
        <dbReference type="ChEBI" id="CHEBI:57692"/>
    </cofactor>
</comment>
<comment type="subcellular location">
    <subcellularLocation>
        <location evidence="1">Mitochondrion outer membrane</location>
        <topology evidence="1">Single-pass membrane protein</topology>
    </subcellularLocation>
</comment>
<comment type="similarity">
    <text evidence="4">Belongs to the flavoprotein pyridine nucleotide cytochrome reductase family.</text>
</comment>
<accession>A5E5C5</accession>